<reference key="1">
    <citation type="journal article" date="2009" name="Genome Res.">
        <title>Comparative genomic analyses of the human fungal pathogens Coccidioides and their relatives.</title>
        <authorList>
            <person name="Sharpton T.J."/>
            <person name="Stajich J.E."/>
            <person name="Rounsley S.D."/>
            <person name="Gardner M.J."/>
            <person name="Wortman J.R."/>
            <person name="Jordar V.S."/>
            <person name="Maiti R."/>
            <person name="Kodira C.D."/>
            <person name="Neafsey D.E."/>
            <person name="Zeng Q."/>
            <person name="Hung C.-Y."/>
            <person name="McMahan C."/>
            <person name="Muszewska A."/>
            <person name="Grynberg M."/>
            <person name="Mandel M.A."/>
            <person name="Kellner E.M."/>
            <person name="Barker B.M."/>
            <person name="Galgiani J.N."/>
            <person name="Orbach M.J."/>
            <person name="Kirkland T.N."/>
            <person name="Cole G.T."/>
            <person name="Henn M.R."/>
            <person name="Birren B.W."/>
            <person name="Taylor J.W."/>
        </authorList>
    </citation>
    <scope>NUCLEOTIDE SEQUENCE [LARGE SCALE GENOMIC DNA]</scope>
    <source>
        <strain>RS</strain>
    </source>
</reference>
<reference key="2">
    <citation type="journal article" date="2010" name="Genome Res.">
        <title>Population genomic sequencing of Coccidioides fungi reveals recent hybridization and transposon control.</title>
        <authorList>
            <person name="Neafsey D.E."/>
            <person name="Barker B.M."/>
            <person name="Sharpton T.J."/>
            <person name="Stajich J.E."/>
            <person name="Park D.J."/>
            <person name="Whiston E."/>
            <person name="Hung C.-Y."/>
            <person name="McMahan C."/>
            <person name="White J."/>
            <person name="Sykes S."/>
            <person name="Heiman D."/>
            <person name="Young S."/>
            <person name="Zeng Q."/>
            <person name="Abouelleil A."/>
            <person name="Aftuck L."/>
            <person name="Bessette D."/>
            <person name="Brown A."/>
            <person name="FitzGerald M."/>
            <person name="Lui A."/>
            <person name="Macdonald J.P."/>
            <person name="Priest M."/>
            <person name="Orbach M.J."/>
            <person name="Galgiani J.N."/>
            <person name="Kirkland T.N."/>
            <person name="Cole G.T."/>
            <person name="Birren B.W."/>
            <person name="Henn M.R."/>
            <person name="Taylor J.W."/>
            <person name="Rounsley S.D."/>
        </authorList>
    </citation>
    <scope>GENOME REANNOTATION</scope>
    <source>
        <strain>RS</strain>
    </source>
</reference>
<dbReference type="EC" id="3.6.4.13"/>
<dbReference type="EMBL" id="GG704911">
    <property type="protein sequence ID" value="EAS34871.1"/>
    <property type="molecule type" value="Genomic_DNA"/>
</dbReference>
<dbReference type="RefSeq" id="XP_001246454.1">
    <property type="nucleotide sequence ID" value="XM_001246453.2"/>
</dbReference>
<dbReference type="SMR" id="Q1EB38"/>
<dbReference type="FunCoup" id="Q1EB38">
    <property type="interactions" value="1033"/>
</dbReference>
<dbReference type="STRING" id="246410.Q1EB38"/>
<dbReference type="GeneID" id="4566960"/>
<dbReference type="KEGG" id="cim:CIMG_00225"/>
<dbReference type="VEuPathDB" id="FungiDB:CIMG_00225"/>
<dbReference type="InParanoid" id="Q1EB38"/>
<dbReference type="OMA" id="EDQFGMM"/>
<dbReference type="OrthoDB" id="10261375at2759"/>
<dbReference type="Proteomes" id="UP000001261">
    <property type="component" value="Unassembled WGS sequence"/>
</dbReference>
<dbReference type="GO" id="GO:0005829">
    <property type="term" value="C:cytosol"/>
    <property type="evidence" value="ECO:0007669"/>
    <property type="project" value="TreeGrafter"/>
</dbReference>
<dbReference type="GO" id="GO:0005730">
    <property type="term" value="C:nucleolus"/>
    <property type="evidence" value="ECO:0007669"/>
    <property type="project" value="UniProtKB-SubCell"/>
</dbReference>
<dbReference type="GO" id="GO:0005524">
    <property type="term" value="F:ATP binding"/>
    <property type="evidence" value="ECO:0007669"/>
    <property type="project" value="UniProtKB-KW"/>
</dbReference>
<dbReference type="GO" id="GO:0016887">
    <property type="term" value="F:ATP hydrolysis activity"/>
    <property type="evidence" value="ECO:0007669"/>
    <property type="project" value="RHEA"/>
</dbReference>
<dbReference type="GO" id="GO:0003723">
    <property type="term" value="F:RNA binding"/>
    <property type="evidence" value="ECO:0007669"/>
    <property type="project" value="UniProtKB-KW"/>
</dbReference>
<dbReference type="GO" id="GO:0003724">
    <property type="term" value="F:RNA helicase activity"/>
    <property type="evidence" value="ECO:0007669"/>
    <property type="project" value="UniProtKB-EC"/>
</dbReference>
<dbReference type="GO" id="GO:0006364">
    <property type="term" value="P:rRNA processing"/>
    <property type="evidence" value="ECO:0007669"/>
    <property type="project" value="UniProtKB-KW"/>
</dbReference>
<dbReference type="CDD" id="cd17959">
    <property type="entry name" value="DEADc_DDX54"/>
    <property type="match status" value="1"/>
</dbReference>
<dbReference type="CDD" id="cd18787">
    <property type="entry name" value="SF2_C_DEAD"/>
    <property type="match status" value="1"/>
</dbReference>
<dbReference type="FunFam" id="3.40.50.300:FF:000865">
    <property type="entry name" value="ATP-dependent RNA helicase DDX54"/>
    <property type="match status" value="1"/>
</dbReference>
<dbReference type="Gene3D" id="3.40.50.300">
    <property type="entry name" value="P-loop containing nucleotide triphosphate hydrolases"/>
    <property type="match status" value="2"/>
</dbReference>
<dbReference type="InterPro" id="IPR012541">
    <property type="entry name" value="DBP10_C"/>
</dbReference>
<dbReference type="InterPro" id="IPR033517">
    <property type="entry name" value="DDX54/DBP10_DEAD-box_helicase"/>
</dbReference>
<dbReference type="InterPro" id="IPR011545">
    <property type="entry name" value="DEAD/DEAH_box_helicase_dom"/>
</dbReference>
<dbReference type="InterPro" id="IPR050079">
    <property type="entry name" value="DEAD_box_RNA_helicase"/>
</dbReference>
<dbReference type="InterPro" id="IPR014001">
    <property type="entry name" value="Helicase_ATP-bd"/>
</dbReference>
<dbReference type="InterPro" id="IPR001650">
    <property type="entry name" value="Helicase_C-like"/>
</dbReference>
<dbReference type="InterPro" id="IPR027417">
    <property type="entry name" value="P-loop_NTPase"/>
</dbReference>
<dbReference type="InterPro" id="IPR000629">
    <property type="entry name" value="RNA-helicase_DEAD-box_CS"/>
</dbReference>
<dbReference type="InterPro" id="IPR014014">
    <property type="entry name" value="RNA_helicase_DEAD_Q_motif"/>
</dbReference>
<dbReference type="PANTHER" id="PTHR47959">
    <property type="entry name" value="ATP-DEPENDENT RNA HELICASE RHLE-RELATED"/>
    <property type="match status" value="1"/>
</dbReference>
<dbReference type="PANTHER" id="PTHR47959:SF8">
    <property type="entry name" value="RNA HELICASE"/>
    <property type="match status" value="1"/>
</dbReference>
<dbReference type="Pfam" id="PF08147">
    <property type="entry name" value="DBP10CT"/>
    <property type="match status" value="1"/>
</dbReference>
<dbReference type="Pfam" id="PF00270">
    <property type="entry name" value="DEAD"/>
    <property type="match status" value="1"/>
</dbReference>
<dbReference type="Pfam" id="PF00271">
    <property type="entry name" value="Helicase_C"/>
    <property type="match status" value="1"/>
</dbReference>
<dbReference type="SMART" id="SM01123">
    <property type="entry name" value="DBP10CT"/>
    <property type="match status" value="1"/>
</dbReference>
<dbReference type="SMART" id="SM00487">
    <property type="entry name" value="DEXDc"/>
    <property type="match status" value="1"/>
</dbReference>
<dbReference type="SMART" id="SM00490">
    <property type="entry name" value="HELICc"/>
    <property type="match status" value="1"/>
</dbReference>
<dbReference type="SUPFAM" id="SSF52540">
    <property type="entry name" value="P-loop containing nucleoside triphosphate hydrolases"/>
    <property type="match status" value="2"/>
</dbReference>
<dbReference type="PROSITE" id="PS00039">
    <property type="entry name" value="DEAD_ATP_HELICASE"/>
    <property type="match status" value="1"/>
</dbReference>
<dbReference type="PROSITE" id="PS51192">
    <property type="entry name" value="HELICASE_ATP_BIND_1"/>
    <property type="match status" value="1"/>
</dbReference>
<dbReference type="PROSITE" id="PS51194">
    <property type="entry name" value="HELICASE_CTER"/>
    <property type="match status" value="1"/>
</dbReference>
<dbReference type="PROSITE" id="PS51195">
    <property type="entry name" value="Q_MOTIF"/>
    <property type="match status" value="1"/>
</dbReference>
<organism>
    <name type="scientific">Coccidioides immitis (strain RS)</name>
    <name type="common">Valley fever fungus</name>
    <dbReference type="NCBI Taxonomy" id="246410"/>
    <lineage>
        <taxon>Eukaryota</taxon>
        <taxon>Fungi</taxon>
        <taxon>Dikarya</taxon>
        <taxon>Ascomycota</taxon>
        <taxon>Pezizomycotina</taxon>
        <taxon>Eurotiomycetes</taxon>
        <taxon>Eurotiomycetidae</taxon>
        <taxon>Onygenales</taxon>
        <taxon>Onygenaceae</taxon>
        <taxon>Coccidioides</taxon>
    </lineage>
</organism>
<protein>
    <recommendedName>
        <fullName>ATP-dependent RNA helicase DBP10</fullName>
        <ecNumber>3.6.4.13</ecNumber>
    </recommendedName>
</protein>
<comment type="function">
    <text evidence="1">ATP-binding RNA helicase involved in the biogenesis of 60S ribosomal subunits and is required for the normal formation of 25S and 5.8S rRNAs.</text>
</comment>
<comment type="catalytic activity">
    <reaction>
        <text>ATP + H2O = ADP + phosphate + H(+)</text>
        <dbReference type="Rhea" id="RHEA:13065"/>
        <dbReference type="ChEBI" id="CHEBI:15377"/>
        <dbReference type="ChEBI" id="CHEBI:15378"/>
        <dbReference type="ChEBI" id="CHEBI:30616"/>
        <dbReference type="ChEBI" id="CHEBI:43474"/>
        <dbReference type="ChEBI" id="CHEBI:456216"/>
        <dbReference type="EC" id="3.6.4.13"/>
    </reaction>
</comment>
<comment type="subcellular location">
    <subcellularLocation>
        <location evidence="1">Nucleus</location>
        <location evidence="1">Nucleolus</location>
    </subcellularLocation>
</comment>
<comment type="domain">
    <text>The Q motif is unique to and characteristic of the DEAD box family of RNA helicases and controls ATP binding and hydrolysis.</text>
</comment>
<comment type="similarity">
    <text evidence="5">Belongs to the DEAD box helicase family. DDX54/DBP10 subfamily.</text>
</comment>
<name>DBP10_COCIM</name>
<gene>
    <name type="primary">DBP10</name>
    <name type="ORF">CIMG_00225</name>
</gene>
<proteinExistence type="inferred from homology"/>
<feature type="chain" id="PRO_0000256045" description="ATP-dependent RNA helicase DBP10">
    <location>
        <begin position="1"/>
        <end position="927"/>
    </location>
</feature>
<feature type="domain" description="Helicase ATP-binding" evidence="2">
    <location>
        <begin position="112"/>
        <end position="284"/>
    </location>
</feature>
<feature type="domain" description="Helicase C-terminal" evidence="3">
    <location>
        <begin position="348"/>
        <end position="502"/>
    </location>
</feature>
<feature type="region of interest" description="Disordered" evidence="4">
    <location>
        <begin position="1"/>
        <end position="54"/>
    </location>
</feature>
<feature type="region of interest" description="Disordered" evidence="4">
    <location>
        <begin position="326"/>
        <end position="363"/>
    </location>
</feature>
<feature type="region of interest" description="Disordered" evidence="4">
    <location>
        <begin position="627"/>
        <end position="671"/>
    </location>
</feature>
<feature type="region of interest" description="Disordered" evidence="4">
    <location>
        <begin position="683"/>
        <end position="711"/>
    </location>
</feature>
<feature type="region of interest" description="Disordered" evidence="4">
    <location>
        <begin position="819"/>
        <end position="927"/>
    </location>
</feature>
<feature type="short sequence motif" description="Q motif">
    <location>
        <begin position="81"/>
        <end position="109"/>
    </location>
</feature>
<feature type="short sequence motif" description="DEAD box">
    <location>
        <begin position="232"/>
        <end position="235"/>
    </location>
</feature>
<feature type="compositionally biased region" description="Acidic residues" evidence="4">
    <location>
        <begin position="39"/>
        <end position="54"/>
    </location>
</feature>
<feature type="compositionally biased region" description="Polar residues" evidence="4">
    <location>
        <begin position="351"/>
        <end position="363"/>
    </location>
</feature>
<feature type="compositionally biased region" description="Basic and acidic residues" evidence="4">
    <location>
        <begin position="627"/>
        <end position="636"/>
    </location>
</feature>
<feature type="compositionally biased region" description="Basic and acidic residues" evidence="4">
    <location>
        <begin position="847"/>
        <end position="877"/>
    </location>
</feature>
<feature type="compositionally biased region" description="Basic and acidic residues" evidence="4">
    <location>
        <begin position="893"/>
        <end position="904"/>
    </location>
</feature>
<feature type="binding site" evidence="2">
    <location>
        <begin position="125"/>
        <end position="132"/>
    </location>
    <ligand>
        <name>ATP</name>
        <dbReference type="ChEBI" id="CHEBI:30616"/>
    </ligand>
</feature>
<accession>Q1EB38</accession>
<accession>J3KGI4</accession>
<sequence>MSENEFDIAKSLFQDEADSDIDTRPRKRKAPTSLNLDVMADDNGDGDDGGSDDDAAFIAAHQASMNRKASNLKGRTVKKGGGFQAMGLNANLLKAITRKGFSVPTPIQRKTIPLVLDDQDVVGMARTGSGKTAAFVIPMIEKLKSHSTKVGSRGLILSPSRELALQTLKVVKELGRGTDLKCVLLVGGDSLEEQFGYMAGNPDIIIATPGRFLHLKVEMNLDLSSIKYVVFDEADRLFEMGFAAQLTEILHGLPQSRQTLLFSATLPKSLVEFARAGLQEPTLVRLDTESKISPDLQSVFFTVKSAEKEGALLHILHDVIKVPTGETEAGKHAREQAISGKSSKKRKRSEQNNPNPQESPTEHSTIIFVATKHHVDYIASLLRESGFAVSYAYGSLDQTARKIQVSNFRTGISNILVVTDVAARGIDIPILENVINYDFPSQAKIFVHRVGRTARAGRKGWSYSLVRDADAPYLLDLQLFLGRRLVMGRGQQESANFAEDVVVGGMARESIARSCEWVSKLLDEDIDIQNQREVAMKGEKLYIRTRNSASAESAKRAKDVVASDGWTMLHPLFNNEASQMEVEREKMLARIGGYKPQETIFEISGRRGGKAGDDEAIDMMRKIRSTMENKRAKKQDANQPTTDAEVPASALATTLGDDKDNGLGDDMDQDDVADMSMASDSELEVTFSYQSDKSKSKKKSGDKQSSGTFQNPEYFMSYTPAAHSFAEERGYGVHSGSNSNFVEASRDATMDLSRDEANRGFAEPRSIMRWDKRHKKYVSRRNDEDGSKGALLVKGESGAKIAASFRSGRFDAWKKSKRLGRMPRVGETENPGLGSTVPARGQKFRHNKEQAPKAADKYRGDYEKRRKKEQELQKRQAETGMLQFGSKGGTKKVKSEIRSVDDVRKARKLKEKRREKNARPSKKGKAR</sequence>
<evidence type="ECO:0000250" key="1"/>
<evidence type="ECO:0000255" key="2">
    <source>
        <dbReference type="PROSITE-ProRule" id="PRU00541"/>
    </source>
</evidence>
<evidence type="ECO:0000255" key="3">
    <source>
        <dbReference type="PROSITE-ProRule" id="PRU00542"/>
    </source>
</evidence>
<evidence type="ECO:0000256" key="4">
    <source>
        <dbReference type="SAM" id="MobiDB-lite"/>
    </source>
</evidence>
<evidence type="ECO:0000305" key="5"/>
<keyword id="KW-0067">ATP-binding</keyword>
<keyword id="KW-0347">Helicase</keyword>
<keyword id="KW-0378">Hydrolase</keyword>
<keyword id="KW-0547">Nucleotide-binding</keyword>
<keyword id="KW-0539">Nucleus</keyword>
<keyword id="KW-1185">Reference proteome</keyword>
<keyword id="KW-0690">Ribosome biogenesis</keyword>
<keyword id="KW-0694">RNA-binding</keyword>
<keyword id="KW-0698">rRNA processing</keyword>